<proteinExistence type="evidence at protein level"/>
<dbReference type="EC" id="4.2.1.1" evidence="2 3"/>
<dbReference type="EMBL" id="AL123456">
    <property type="protein sequence ID" value="CCP44040.1"/>
    <property type="molecule type" value="Genomic_DNA"/>
</dbReference>
<dbReference type="PIR" id="H70771">
    <property type="entry name" value="H70771"/>
</dbReference>
<dbReference type="RefSeq" id="NP_215800.1">
    <property type="nucleotide sequence ID" value="NC_000962.3"/>
</dbReference>
<dbReference type="RefSeq" id="WP_003406616.1">
    <property type="nucleotide sequence ID" value="NC_000962.3"/>
</dbReference>
<dbReference type="PDB" id="1YLK">
    <property type="method" value="X-ray"/>
    <property type="resolution" value="2.00 A"/>
    <property type="chains" value="A/B/C/D=2-163"/>
</dbReference>
<dbReference type="PDB" id="4YF4">
    <property type="method" value="X-ray"/>
    <property type="resolution" value="1.80 A"/>
    <property type="chains" value="A/B/C/D=2-163"/>
</dbReference>
<dbReference type="PDB" id="4YF5">
    <property type="method" value="X-ray"/>
    <property type="resolution" value="2.00 A"/>
    <property type="chains" value="A/B/C/D=2-163"/>
</dbReference>
<dbReference type="PDB" id="4YF6">
    <property type="method" value="X-ray"/>
    <property type="resolution" value="3.00 A"/>
    <property type="chains" value="A/B/C/D=2-163"/>
</dbReference>
<dbReference type="PDBsum" id="1YLK"/>
<dbReference type="PDBsum" id="4YF4"/>
<dbReference type="PDBsum" id="4YF5"/>
<dbReference type="PDBsum" id="4YF6"/>
<dbReference type="SMR" id="P9WPJ7"/>
<dbReference type="FunCoup" id="P9WPJ7">
    <property type="interactions" value="5"/>
</dbReference>
<dbReference type="STRING" id="83332.Rv1284"/>
<dbReference type="BindingDB" id="P9WPJ7"/>
<dbReference type="ChEMBL" id="CHEMBL5631"/>
<dbReference type="DrugCentral" id="P9WPJ7"/>
<dbReference type="iPTMnet" id="P9WPJ7"/>
<dbReference type="PaxDb" id="83332-Rv1284"/>
<dbReference type="DNASU" id="886987"/>
<dbReference type="GeneID" id="45425256"/>
<dbReference type="GeneID" id="886987"/>
<dbReference type="KEGG" id="mtu:Rv1284"/>
<dbReference type="KEGG" id="mtv:RVBD_1284"/>
<dbReference type="TubercuList" id="Rv1284"/>
<dbReference type="eggNOG" id="COG0288">
    <property type="taxonomic scope" value="Bacteria"/>
</dbReference>
<dbReference type="InParanoid" id="P9WPJ7"/>
<dbReference type="OrthoDB" id="8968066at2"/>
<dbReference type="PhylomeDB" id="P9WPJ7"/>
<dbReference type="EvolutionaryTrace" id="P9WPJ7"/>
<dbReference type="PRO" id="PR:P9WPJ7"/>
<dbReference type="Proteomes" id="UP000001584">
    <property type="component" value="Chromosome"/>
</dbReference>
<dbReference type="GO" id="GO:0005886">
    <property type="term" value="C:plasma membrane"/>
    <property type="evidence" value="ECO:0007005"/>
    <property type="project" value="MTBBASE"/>
</dbReference>
<dbReference type="GO" id="GO:0004089">
    <property type="term" value="F:carbonate dehydratase activity"/>
    <property type="evidence" value="ECO:0000314"/>
    <property type="project" value="MTBBASE"/>
</dbReference>
<dbReference type="GO" id="GO:0008270">
    <property type="term" value="F:zinc ion binding"/>
    <property type="evidence" value="ECO:0000314"/>
    <property type="project" value="MTBBASE"/>
</dbReference>
<dbReference type="CDD" id="cd03379">
    <property type="entry name" value="beta_CA_cladeD"/>
    <property type="match status" value="1"/>
</dbReference>
<dbReference type="FunFam" id="3.40.1050.10:FF:000011">
    <property type="entry name" value="Beta-carbonic anhydrase 1"/>
    <property type="match status" value="1"/>
</dbReference>
<dbReference type="Gene3D" id="3.40.1050.10">
    <property type="entry name" value="Carbonic anhydrase"/>
    <property type="match status" value="1"/>
</dbReference>
<dbReference type="InterPro" id="IPR001765">
    <property type="entry name" value="Carbonic_anhydrase"/>
</dbReference>
<dbReference type="InterPro" id="IPR036874">
    <property type="entry name" value="Carbonic_anhydrase_sf"/>
</dbReference>
<dbReference type="PANTHER" id="PTHR43175:SF3">
    <property type="entry name" value="CARBON DISULFIDE HYDROLASE"/>
    <property type="match status" value="1"/>
</dbReference>
<dbReference type="PANTHER" id="PTHR43175">
    <property type="entry name" value="CARBONIC ANHYDRASE"/>
    <property type="match status" value="1"/>
</dbReference>
<dbReference type="Pfam" id="PF00484">
    <property type="entry name" value="Pro_CA"/>
    <property type="match status" value="1"/>
</dbReference>
<dbReference type="SMART" id="SM00947">
    <property type="entry name" value="Pro_CA"/>
    <property type="match status" value="1"/>
</dbReference>
<dbReference type="SUPFAM" id="SSF53056">
    <property type="entry name" value="beta-carbonic anhydrase, cab"/>
    <property type="match status" value="1"/>
</dbReference>
<name>MTCA1_MYCTU</name>
<gene>
    <name evidence="4" type="primary">mtcA1</name>
    <name type="synonym">canA</name>
    <name type="ordered locus">Rv1284</name>
    <name type="ORF">MTCY373.03</name>
</gene>
<reference key="1">
    <citation type="journal article" date="1998" name="Nature">
        <title>Deciphering the biology of Mycobacterium tuberculosis from the complete genome sequence.</title>
        <authorList>
            <person name="Cole S.T."/>
            <person name="Brosch R."/>
            <person name="Parkhill J."/>
            <person name="Garnier T."/>
            <person name="Churcher C.M."/>
            <person name="Harris D.E."/>
            <person name="Gordon S.V."/>
            <person name="Eiglmeier K."/>
            <person name="Gas S."/>
            <person name="Barry C.E. III"/>
            <person name="Tekaia F."/>
            <person name="Badcock K."/>
            <person name="Basham D."/>
            <person name="Brown D."/>
            <person name="Chillingworth T."/>
            <person name="Connor R."/>
            <person name="Davies R.M."/>
            <person name="Devlin K."/>
            <person name="Feltwell T."/>
            <person name="Gentles S."/>
            <person name="Hamlin N."/>
            <person name="Holroyd S."/>
            <person name="Hornsby T."/>
            <person name="Jagels K."/>
            <person name="Krogh A."/>
            <person name="McLean J."/>
            <person name="Moule S."/>
            <person name="Murphy L.D."/>
            <person name="Oliver S."/>
            <person name="Osborne J."/>
            <person name="Quail M.A."/>
            <person name="Rajandream M.A."/>
            <person name="Rogers J."/>
            <person name="Rutter S."/>
            <person name="Seeger K."/>
            <person name="Skelton S."/>
            <person name="Squares S."/>
            <person name="Squares R."/>
            <person name="Sulston J.E."/>
            <person name="Taylor K."/>
            <person name="Whitehead S."/>
            <person name="Barrell B.G."/>
        </authorList>
    </citation>
    <scope>NUCLEOTIDE SEQUENCE [LARGE SCALE GENOMIC DNA]</scope>
    <source>
        <strain>ATCC 25618 / H37Rv</strain>
    </source>
</reference>
<reference key="2">
    <citation type="journal article" date="2008" name="BMC Syst. Biol.">
        <title>targetTB: a target identification pipeline for Mycobacterium tuberculosis through an interactome, reactome and genome-scale structural analysis.</title>
        <authorList>
            <person name="Raman K."/>
            <person name="Yeturu K."/>
            <person name="Chandra N."/>
        </authorList>
    </citation>
    <scope>IDENTIFICATION AS A DRUG TARGET [LARGE SCALE ANALYSIS]</scope>
</reference>
<reference key="3">
    <citation type="journal article" date="2009" name="J. Med. Chem.">
        <title>Molecular cloning, characterization, and inhibition studies of the Rv1284 beta-carbonic anhydrase from Mycobacterium tuberculosis with sulfonamides and a sulfamate.</title>
        <authorList>
            <person name="Minakuchi T."/>
            <person name="Nishimori I."/>
            <person name="Vullo D."/>
            <person name="Scozzafava A."/>
            <person name="Supuran C.T."/>
        </authorList>
    </citation>
    <scope>FUNCTION</scope>
    <scope>CATALYTIC ACTIVITY</scope>
    <scope>ACTIVITY REGULATION</scope>
    <scope>NOMENCLATURE</scope>
</reference>
<reference key="4">
    <citation type="journal article" date="2009" name="J. Med. Chem.">
        <title>Discovery of low nanomolar and subnanomolar inhibitors of the mycobacterial beta-carbonic anhydrases Rv1284 and Rv3273.</title>
        <authorList>
            <person name="Guzel O."/>
            <person name="Maresca A."/>
            <person name="Scozzafava A."/>
            <person name="Salman A."/>
            <person name="Balaban A.T."/>
            <person name="Supuran C.T."/>
        </authorList>
    </citation>
    <scope>CATALYTIC ACTIVITY</scope>
    <scope>ACTIVITY REGULATION</scope>
</reference>
<reference key="5">
    <citation type="journal article" date="2011" name="Mol. Cell. Proteomics">
        <title>Proteogenomic analysis of Mycobacterium tuberculosis by high resolution mass spectrometry.</title>
        <authorList>
            <person name="Kelkar D.S."/>
            <person name="Kumar D."/>
            <person name="Kumar P."/>
            <person name="Balakrishnan L."/>
            <person name="Muthusamy B."/>
            <person name="Yadav A.K."/>
            <person name="Shrivastava P."/>
            <person name="Marimuthu A."/>
            <person name="Anand S."/>
            <person name="Sundaram H."/>
            <person name="Kingsbury R."/>
            <person name="Harsha H.C."/>
            <person name="Nair B."/>
            <person name="Prasad T.S."/>
            <person name="Chauhan D.S."/>
            <person name="Katoch K."/>
            <person name="Katoch V.M."/>
            <person name="Kumar P."/>
            <person name="Chaerkady R."/>
            <person name="Ramachandran S."/>
            <person name="Dash D."/>
            <person name="Pandey A."/>
        </authorList>
    </citation>
    <scope>ACETYLATION [LARGE SCALE ANALYSIS] AT THR-2</scope>
    <scope>CLEAVAGE OF INITIATOR METHIONINE [LARGE SCALE ANALYSIS]</scope>
    <scope>IDENTIFICATION BY MASS SPECTROMETRY [LARGE SCALE ANALYSIS]</scope>
    <source>
        <strain>ATCC 25618 / H37Rv</strain>
    </source>
</reference>
<reference key="6">
    <citation type="journal article" date="2005" name="J. Biol. Chem.">
        <title>Structure and function of carbonic anhydrases from Mycobacterium tuberculosis.</title>
        <authorList>
            <person name="Suarez Covarrubias A."/>
            <person name="Larsson A.M."/>
            <person name="Hogbom M."/>
            <person name="Lindberg J."/>
            <person name="Bergfors T."/>
            <person name="Bjorkelid C."/>
            <person name="Mowbray S.L."/>
            <person name="Unge T."/>
            <person name="Jones T.A."/>
        </authorList>
    </citation>
    <scope>X-RAY CRYSTALLOGRAPHY (2.0 ANGSTROMS) IN COMPLEX WITH COFACTOR</scope>
    <scope>SUBUNIT</scope>
    <scope>COFACTOR</scope>
</reference>
<protein>
    <recommendedName>
        <fullName evidence="4">Beta-carbonic anhydrase 1</fullName>
        <shortName evidence="4">Beta-CA 1</shortName>
        <ecNumber evidence="2 3">4.2.1.1</ecNumber>
    </recommendedName>
    <alternativeName>
        <fullName evidence="4">Carbonate dehydratase 1</fullName>
    </alternativeName>
    <alternativeName>
        <fullName evidence="4">mtCA 1</fullName>
    </alternativeName>
</protein>
<evidence type="ECO:0000269" key="1">
    <source>
    </source>
</evidence>
<evidence type="ECO:0000269" key="2">
    <source>
    </source>
</evidence>
<evidence type="ECO:0000269" key="3">
    <source>
    </source>
</evidence>
<evidence type="ECO:0000303" key="4">
    <source>
    </source>
</evidence>
<evidence type="ECO:0000305" key="5"/>
<evidence type="ECO:0007744" key="6">
    <source>
    </source>
</evidence>
<evidence type="ECO:0007829" key="7">
    <source>
        <dbReference type="PDB" id="1YLK"/>
    </source>
</evidence>
<organism>
    <name type="scientific">Mycobacterium tuberculosis (strain ATCC 25618 / H37Rv)</name>
    <dbReference type="NCBI Taxonomy" id="83332"/>
    <lineage>
        <taxon>Bacteria</taxon>
        <taxon>Bacillati</taxon>
        <taxon>Actinomycetota</taxon>
        <taxon>Actinomycetes</taxon>
        <taxon>Mycobacteriales</taxon>
        <taxon>Mycobacteriaceae</taxon>
        <taxon>Mycobacterium</taxon>
        <taxon>Mycobacterium tuberculosis complex</taxon>
    </lineage>
</organism>
<sequence length="163" mass="18189">MTVTDDYLANNVDYASGFKGPLPMPPSKHIAIVACMDARLDVYRMLGIKEGEAHVIRNAGCVVTDDVIRSLAISQRLLGTREIILLHHTDCGMLTFTDDDFKRAIQDETGIRPTWSPESYPDAVEDVRQSLRRIEVNPFVTKHTSLRGFVFDVATGKLNEVTP</sequence>
<feature type="initiator methionine" description="Removed" evidence="6">
    <location>
        <position position="1"/>
    </location>
</feature>
<feature type="chain" id="PRO_0000103784" description="Beta-carbonic anhydrase 1">
    <location>
        <begin position="2"/>
        <end position="163"/>
    </location>
</feature>
<feature type="binding site" evidence="1">
    <location>
        <position position="35"/>
    </location>
    <ligand>
        <name>Zn(2+)</name>
        <dbReference type="ChEBI" id="CHEBI:29105"/>
    </ligand>
</feature>
<feature type="binding site" evidence="1">
    <location>
        <position position="37"/>
    </location>
    <ligand>
        <name>Zn(2+)</name>
        <dbReference type="ChEBI" id="CHEBI:29105"/>
    </ligand>
</feature>
<feature type="binding site" evidence="1">
    <location>
        <position position="88"/>
    </location>
    <ligand>
        <name>Zn(2+)</name>
        <dbReference type="ChEBI" id="CHEBI:29105"/>
    </ligand>
</feature>
<feature type="binding site" evidence="1">
    <location>
        <position position="91"/>
    </location>
    <ligand>
        <name>Zn(2+)</name>
        <dbReference type="ChEBI" id="CHEBI:29105"/>
    </ligand>
</feature>
<feature type="modified residue" description="N-acetylthreonine" evidence="6">
    <location>
        <position position="2"/>
    </location>
</feature>
<feature type="helix" evidence="7">
    <location>
        <begin position="3"/>
        <end position="16"/>
    </location>
</feature>
<feature type="strand" evidence="7">
    <location>
        <begin position="30"/>
        <end position="35"/>
    </location>
</feature>
<feature type="helix" evidence="7">
    <location>
        <begin position="42"/>
        <end position="46"/>
    </location>
</feature>
<feature type="strand" evidence="7">
    <location>
        <begin position="52"/>
        <end position="58"/>
    </location>
</feature>
<feature type="helix" evidence="7">
    <location>
        <begin position="65"/>
        <end position="76"/>
    </location>
</feature>
<feature type="strand" evidence="7">
    <location>
        <begin position="82"/>
        <end position="90"/>
    </location>
</feature>
<feature type="helix" evidence="7">
    <location>
        <begin position="92"/>
        <end position="94"/>
    </location>
</feature>
<feature type="helix" evidence="7">
    <location>
        <begin position="98"/>
        <end position="109"/>
    </location>
</feature>
<feature type="helix" evidence="7">
    <location>
        <begin position="123"/>
        <end position="135"/>
    </location>
</feature>
<feature type="strand" evidence="7">
    <location>
        <begin position="144"/>
        <end position="151"/>
    </location>
</feature>
<feature type="turn" evidence="7">
    <location>
        <begin position="153"/>
        <end position="155"/>
    </location>
</feature>
<feature type="strand" evidence="7">
    <location>
        <begin position="158"/>
        <end position="161"/>
    </location>
</feature>
<keyword id="KW-0002">3D-structure</keyword>
<keyword id="KW-0007">Acetylation</keyword>
<keyword id="KW-0456">Lyase</keyword>
<keyword id="KW-0479">Metal-binding</keyword>
<keyword id="KW-1185">Reference proteome</keyword>
<keyword id="KW-0862">Zinc</keyword>
<comment type="function">
    <text evidence="2">Catalyzes the reversible hydration of carbon dioxide to form bicarbonate.</text>
</comment>
<comment type="catalytic activity">
    <reaction evidence="2 3">
        <text>hydrogencarbonate + H(+) = CO2 + H2O</text>
        <dbReference type="Rhea" id="RHEA:10748"/>
        <dbReference type="ChEBI" id="CHEBI:15377"/>
        <dbReference type="ChEBI" id="CHEBI:15378"/>
        <dbReference type="ChEBI" id="CHEBI:16526"/>
        <dbReference type="ChEBI" id="CHEBI:17544"/>
        <dbReference type="EC" id="4.2.1.1"/>
    </reaction>
</comment>
<comment type="cofactor">
    <cofactor evidence="1">
        <name>Zn(2+)</name>
        <dbReference type="ChEBI" id="CHEBI:29105"/>
    </cofactor>
    <text evidence="1">Binds 1 zinc ion per subunit.</text>
</comment>
<comment type="activity regulation">
    <text evidence="2 3">Inhibited by sulfonamides and sulfamates. The best inhibitors are 3-bromosulfanilamide and indisulam.</text>
</comment>
<comment type="subunit">
    <text evidence="1">Homotetramer.</text>
</comment>
<comment type="miscellaneous">
    <text>Was identified as a high-confidence drug target.</text>
</comment>
<comment type="similarity">
    <text evidence="5">Belongs to the beta-class carbonic anhydrase family.</text>
</comment>
<accession>P9WPJ7</accession>
<accession>L0T7U0</accession>
<accession>P64797</accession>
<accession>Q10612</accession>